<organism>
    <name type="scientific">Pyrococcus horikoshii (strain ATCC 700860 / DSM 12428 / JCM 9974 / NBRC 100139 / OT-3)</name>
    <dbReference type="NCBI Taxonomy" id="70601"/>
    <lineage>
        <taxon>Archaea</taxon>
        <taxon>Methanobacteriati</taxon>
        <taxon>Methanobacteriota</taxon>
        <taxon>Thermococci</taxon>
        <taxon>Thermococcales</taxon>
        <taxon>Thermococcaceae</taxon>
        <taxon>Pyrococcus</taxon>
    </lineage>
</organism>
<accession>O59431</accession>
<keyword id="KW-0687">Ribonucleoprotein</keyword>
<keyword id="KW-0689">Ribosomal protein</keyword>
<keyword id="KW-0694">RNA-binding</keyword>
<keyword id="KW-0699">rRNA-binding</keyword>
<keyword id="KW-0820">tRNA-binding</keyword>
<gene>
    <name evidence="1" type="primary">rpl5</name>
    <name type="ordered locus">PH1765</name>
</gene>
<reference key="1">
    <citation type="journal article" date="1998" name="DNA Res.">
        <title>Complete sequence and gene organization of the genome of a hyper-thermophilic archaebacterium, Pyrococcus horikoshii OT3.</title>
        <authorList>
            <person name="Kawarabayasi Y."/>
            <person name="Sawada M."/>
            <person name="Horikawa H."/>
            <person name="Haikawa Y."/>
            <person name="Hino Y."/>
            <person name="Yamamoto S."/>
            <person name="Sekine M."/>
            <person name="Baba S."/>
            <person name="Kosugi H."/>
            <person name="Hosoyama A."/>
            <person name="Nagai Y."/>
            <person name="Sakai M."/>
            <person name="Ogura K."/>
            <person name="Otsuka R."/>
            <person name="Nakazawa H."/>
            <person name="Takamiya M."/>
            <person name="Ohfuku Y."/>
            <person name="Funahashi T."/>
            <person name="Tanaka T."/>
            <person name="Kudoh Y."/>
            <person name="Yamazaki J."/>
            <person name="Kushida N."/>
            <person name="Oguchi A."/>
            <person name="Aoki K."/>
            <person name="Yoshizawa T."/>
            <person name="Nakamura Y."/>
            <person name="Robb F.T."/>
            <person name="Horikoshi K."/>
            <person name="Masuchi Y."/>
            <person name="Shizuya H."/>
            <person name="Kikuchi H."/>
        </authorList>
    </citation>
    <scope>NUCLEOTIDE SEQUENCE [LARGE SCALE GENOMIC DNA]</scope>
    <source>
        <strain>ATCC 700860 / DSM 12428 / JCM 9974 / NBRC 100139 / OT-3</strain>
    </source>
</reference>
<evidence type="ECO:0000255" key="1">
    <source>
        <dbReference type="HAMAP-Rule" id="MF_01333"/>
    </source>
</evidence>
<evidence type="ECO:0000305" key="2"/>
<name>RL5_PYRHO</name>
<sequence length="188" mass="21610">MPVSIPNREEILADWEAHPMRRPRIQKVTINIGVGESGERLTKAEIMLQRLTGQKPIRRKAKKTNRDFGIRRGEPIAVKVTLRGPKAYEMLKRLLAAVDYKLKASSFDEHGNVCFGIEEHINIPGVEYDPEIGIFGMDVCVTLERPGFRVARRKRKRARIPTRHKLTKEEGMLYMMEEFGVEIVEEEG</sequence>
<feature type="chain" id="PRO_0000125066" description="Large ribosomal subunit protein uL5">
    <location>
        <begin position="1"/>
        <end position="188"/>
    </location>
</feature>
<comment type="function">
    <text evidence="1">This is one of the proteins that bind and probably mediate the attachment of the 5S RNA into the large ribosomal subunit, where it forms part of the central protuberance. In the 70S ribosome it contacts protein S13 of the 30S subunit (bridge B1b), connecting the 2 subunits; this bridge is implicated in subunit movement. May contact the P site tRNA; the 5S rRNA and some of its associated proteins might help stabilize positioning of ribosome-bound tRNAs.</text>
</comment>
<comment type="subunit">
    <text evidence="1">Part of the 50S ribosomal subunit; contacts the 5S rRNA and probably tRNA. Forms a bridge to the 30S subunit in the 70S ribosome.</text>
</comment>
<comment type="similarity">
    <text evidence="1">Belongs to the universal ribosomal protein uL5 family.</text>
</comment>
<dbReference type="EMBL" id="BA000001">
    <property type="protein sequence ID" value="BAA30880.1"/>
    <property type="molecule type" value="Genomic_DNA"/>
</dbReference>
<dbReference type="PIR" id="A71186">
    <property type="entry name" value="A71186"/>
</dbReference>
<dbReference type="RefSeq" id="WP_010885827.1">
    <property type="nucleotide sequence ID" value="NC_000961.1"/>
</dbReference>
<dbReference type="SMR" id="O59431"/>
<dbReference type="STRING" id="70601.gene:9378763"/>
<dbReference type="EnsemblBacteria" id="BAA30880">
    <property type="protein sequence ID" value="BAA30880"/>
    <property type="gene ID" value="BAA30880"/>
</dbReference>
<dbReference type="GeneID" id="1442609"/>
<dbReference type="KEGG" id="pho:PH1765"/>
<dbReference type="eggNOG" id="arCOG04092">
    <property type="taxonomic scope" value="Archaea"/>
</dbReference>
<dbReference type="OrthoDB" id="372044at2157"/>
<dbReference type="Proteomes" id="UP000000752">
    <property type="component" value="Chromosome"/>
</dbReference>
<dbReference type="GO" id="GO:1990904">
    <property type="term" value="C:ribonucleoprotein complex"/>
    <property type="evidence" value="ECO:0007669"/>
    <property type="project" value="UniProtKB-KW"/>
</dbReference>
<dbReference type="GO" id="GO:0005840">
    <property type="term" value="C:ribosome"/>
    <property type="evidence" value="ECO:0007669"/>
    <property type="project" value="UniProtKB-KW"/>
</dbReference>
<dbReference type="GO" id="GO:0019843">
    <property type="term" value="F:rRNA binding"/>
    <property type="evidence" value="ECO:0007669"/>
    <property type="project" value="UniProtKB-UniRule"/>
</dbReference>
<dbReference type="GO" id="GO:0003735">
    <property type="term" value="F:structural constituent of ribosome"/>
    <property type="evidence" value="ECO:0007669"/>
    <property type="project" value="InterPro"/>
</dbReference>
<dbReference type="GO" id="GO:0000049">
    <property type="term" value="F:tRNA binding"/>
    <property type="evidence" value="ECO:0007669"/>
    <property type="project" value="UniProtKB-UniRule"/>
</dbReference>
<dbReference type="GO" id="GO:0006412">
    <property type="term" value="P:translation"/>
    <property type="evidence" value="ECO:0007669"/>
    <property type="project" value="UniProtKB-UniRule"/>
</dbReference>
<dbReference type="FunFam" id="3.30.1440.10:FF:000002">
    <property type="entry name" value="60S ribosomal protein L11"/>
    <property type="match status" value="1"/>
</dbReference>
<dbReference type="Gene3D" id="3.30.1440.10">
    <property type="match status" value="1"/>
</dbReference>
<dbReference type="HAMAP" id="MF_01333_A">
    <property type="entry name" value="Ribosomal_uL5_A"/>
    <property type="match status" value="1"/>
</dbReference>
<dbReference type="InterPro" id="IPR002132">
    <property type="entry name" value="Ribosomal_uL5"/>
</dbReference>
<dbReference type="InterPro" id="IPR022804">
    <property type="entry name" value="Ribosomal_uL5_arc"/>
</dbReference>
<dbReference type="InterPro" id="IPR031309">
    <property type="entry name" value="Ribosomal_uL5_C"/>
</dbReference>
<dbReference type="InterPro" id="IPR022803">
    <property type="entry name" value="Ribosomal_uL5_dom_sf"/>
</dbReference>
<dbReference type="InterPro" id="IPR031310">
    <property type="entry name" value="Ribosomal_uL5_N"/>
</dbReference>
<dbReference type="NCBIfam" id="NF003258">
    <property type="entry name" value="PRK04219.1"/>
    <property type="match status" value="1"/>
</dbReference>
<dbReference type="PANTHER" id="PTHR11994">
    <property type="entry name" value="60S RIBOSOMAL PROTEIN L11-RELATED"/>
    <property type="match status" value="1"/>
</dbReference>
<dbReference type="Pfam" id="PF00281">
    <property type="entry name" value="Ribosomal_L5"/>
    <property type="match status" value="1"/>
</dbReference>
<dbReference type="Pfam" id="PF00673">
    <property type="entry name" value="Ribosomal_L5_C"/>
    <property type="match status" value="1"/>
</dbReference>
<dbReference type="PIRSF" id="PIRSF002161">
    <property type="entry name" value="Ribosomal_L5"/>
    <property type="match status" value="1"/>
</dbReference>
<dbReference type="SUPFAM" id="SSF55282">
    <property type="entry name" value="RL5-like"/>
    <property type="match status" value="1"/>
</dbReference>
<protein>
    <recommendedName>
        <fullName evidence="1">Large ribosomal subunit protein uL5</fullName>
    </recommendedName>
    <alternativeName>
        <fullName evidence="2">50S ribosomal protein L5</fullName>
    </alternativeName>
</protein>
<proteinExistence type="inferred from homology"/>